<feature type="initiator methionine" description="Removed" evidence="3">
    <location>
        <position position="1"/>
    </location>
</feature>
<feature type="chain" id="PRO_0000431518" description="Isocitrate dehydrogenase [NADP]">
    <location>
        <begin position="2"/>
        <end position="419"/>
    </location>
</feature>
<feature type="binding site" evidence="1">
    <location>
        <position position="102"/>
    </location>
    <ligand>
        <name>NADP(+)</name>
        <dbReference type="ChEBI" id="CHEBI:58349"/>
    </ligand>
</feature>
<feature type="binding site" evidence="1">
    <location>
        <position position="111"/>
    </location>
    <ligand>
        <name>D-threo-isocitrate</name>
        <dbReference type="ChEBI" id="CHEBI:15562"/>
    </ligand>
</feature>
<feature type="binding site" evidence="1">
    <location>
        <position position="113"/>
    </location>
    <ligand>
        <name>D-threo-isocitrate</name>
        <dbReference type="ChEBI" id="CHEBI:15562"/>
    </ligand>
</feature>
<feature type="binding site" evidence="1">
    <location>
        <position position="117"/>
    </location>
    <ligand>
        <name>D-threo-isocitrate</name>
        <dbReference type="ChEBI" id="CHEBI:15562"/>
    </ligand>
</feature>
<feature type="binding site" evidence="1">
    <location>
        <position position="127"/>
    </location>
    <ligand>
        <name>D-threo-isocitrate</name>
        <dbReference type="ChEBI" id="CHEBI:15562"/>
    </ligand>
</feature>
<feature type="binding site" evidence="1">
    <location>
        <position position="151"/>
    </location>
    <ligand>
        <name>D-threo-isocitrate</name>
        <dbReference type="ChEBI" id="CHEBI:15562"/>
    </ligand>
</feature>
<feature type="binding site" evidence="1">
    <location>
        <position position="306"/>
    </location>
    <ligand>
        <name>Mg(2+)</name>
        <dbReference type="ChEBI" id="CHEBI:18420"/>
    </ligand>
</feature>
<feature type="binding site" evidence="1">
    <location>
        <begin position="338"/>
        <end position="344"/>
    </location>
    <ligand>
        <name>NADP(+)</name>
        <dbReference type="ChEBI" id="CHEBI:58349"/>
    </ligand>
</feature>
<feature type="binding site" evidence="1">
    <location>
        <position position="351"/>
    </location>
    <ligand>
        <name>NADP(+)</name>
        <dbReference type="ChEBI" id="CHEBI:58349"/>
    </ligand>
</feature>
<feature type="binding site" evidence="1">
    <location>
        <position position="390"/>
    </location>
    <ligand>
        <name>NADP(+)</name>
        <dbReference type="ChEBI" id="CHEBI:58349"/>
    </ligand>
</feature>
<feature type="binding site" evidence="1">
    <location>
        <position position="394"/>
    </location>
    <ligand>
        <name>NADP(+)</name>
        <dbReference type="ChEBI" id="CHEBI:58349"/>
    </ligand>
</feature>
<feature type="site" description="Critical for catalysis" evidence="1">
    <location>
        <position position="158"/>
    </location>
</feature>
<feature type="site" description="Critical for catalysis" evidence="1">
    <location>
        <position position="228"/>
    </location>
</feature>
<feature type="sequence conflict" description="In Ref. 1; CAC80860." evidence="6" ref="1">
    <original>E</original>
    <variation>K</variation>
    <location>
        <position position="268"/>
    </location>
</feature>
<feature type="sequence conflict" description="In Ref. 1; CAC80860." evidence="6" ref="1">
    <original>D</original>
    <variation>N</variation>
    <location>
        <position position="294"/>
    </location>
</feature>
<feature type="sequence conflict" description="In Ref. 1; CAC80860." evidence="6" ref="1">
    <original>E</original>
    <variation>K</variation>
    <location>
        <position position="347"/>
    </location>
</feature>
<feature type="sequence conflict" description="In Ref. 1; CAC80860." evidence="6" ref="1">
    <original>A</original>
    <variation>T</variation>
    <location>
        <position position="378"/>
    </location>
</feature>
<accession>D4GU92</accession>
<accession>Q8X277</accession>
<comment type="function">
    <text evidence="2 3">Catalyzes the oxidative decarboxylation of isocitrate to 2-oxoglutarate and carbon dioxide with the concomitant reduction of NADP(+).</text>
</comment>
<comment type="catalytic activity">
    <reaction evidence="2 3">
        <text>D-threo-isocitrate + NADP(+) = 2-oxoglutarate + CO2 + NADPH</text>
        <dbReference type="Rhea" id="RHEA:19629"/>
        <dbReference type="ChEBI" id="CHEBI:15562"/>
        <dbReference type="ChEBI" id="CHEBI:16526"/>
        <dbReference type="ChEBI" id="CHEBI:16810"/>
        <dbReference type="ChEBI" id="CHEBI:57783"/>
        <dbReference type="ChEBI" id="CHEBI:58349"/>
        <dbReference type="EC" id="1.1.1.42"/>
    </reaction>
</comment>
<comment type="cofactor">
    <cofactor evidence="7 8">
        <name>Mg(2+)</name>
        <dbReference type="ChEBI" id="CHEBI:18420"/>
    </cofactor>
    <cofactor evidence="1">
        <name>Mn(2+)</name>
        <dbReference type="ChEBI" id="CHEBI:29035"/>
    </cofactor>
    <text evidence="1">Binds 1 Mg(2+) or Mn(2+) ion per subunit.</text>
</comment>
<comment type="biophysicochemical properties">
    <kinetics>
        <KM evidence="3">110 uM for NADP(+) (for native enzyme)</KM>
        <KM evidence="2">93 uM for NADP(+) (for recombinant enzyme)</KM>
        <KM evidence="3">130 uM for isocitrate (for native enzyme)</KM>
        <KM evidence="2">105 uM for isocitrate (for recombinant enzyme)</KM>
        <Vmax evidence="3">68.0 umol/min/mg enzyme (for native enzyme)</Vmax>
        <Vmax evidence="2">77.0 umol/min/mg enzyme (for recombinant enzyme)</Vmax>
    </kinetics>
</comment>
<comment type="subunit">
    <text evidence="3">Homodimer.</text>
</comment>
<comment type="similarity">
    <text evidence="6">Belongs to the isocitrate and isopropylmalate dehydrogenases family.</text>
</comment>
<organism>
    <name type="scientific">Haloferax volcanii (strain ATCC 29605 / DSM 3757 / JCM 8879 / NBRC 14742 / NCIMB 2012 / VKM B-1768 / DS2)</name>
    <name type="common">Halobacterium volcanii</name>
    <dbReference type="NCBI Taxonomy" id="309800"/>
    <lineage>
        <taxon>Archaea</taxon>
        <taxon>Methanobacteriati</taxon>
        <taxon>Methanobacteriota</taxon>
        <taxon>Stenosarchaea group</taxon>
        <taxon>Halobacteria</taxon>
        <taxon>Halobacteriales</taxon>
        <taxon>Haloferacaceae</taxon>
        <taxon>Haloferax</taxon>
    </lineage>
</organism>
<gene>
    <name evidence="9" type="primary">icd</name>
    <name evidence="10" type="synonym">icdh</name>
    <name evidence="9" type="ordered locus">HVO_2588</name>
    <name evidence="11" type="ORF">C498_08220</name>
</gene>
<protein>
    <recommendedName>
        <fullName evidence="5">Isocitrate dehydrogenase [NADP]</fullName>
        <shortName evidence="4">ICDH</shortName>
        <shortName evidence="1">IDH</shortName>
        <ecNumber evidence="2 3">1.1.1.42</ecNumber>
    </recommendedName>
    <alternativeName>
        <fullName evidence="1">IDP</fullName>
    </alternativeName>
    <alternativeName>
        <fullName evidence="1">NADP(+)-specific ICDH</fullName>
    </alternativeName>
    <alternativeName>
        <fullName evidence="1">Oxalosuccinate decarboxylase</fullName>
    </alternativeName>
</protein>
<proteinExistence type="evidence at protein level"/>
<name>IDH_HALVD</name>
<dbReference type="EC" id="1.1.1.42" evidence="2 3"/>
<dbReference type="EMBL" id="AJ251585">
    <property type="protein sequence ID" value="CAC80860.2"/>
    <property type="molecule type" value="Genomic_DNA"/>
</dbReference>
<dbReference type="EMBL" id="CP001956">
    <property type="protein sequence ID" value="ADE02810.1"/>
    <property type="molecule type" value="Genomic_DNA"/>
</dbReference>
<dbReference type="EMBL" id="AOHU01000046">
    <property type="protein sequence ID" value="ELY32497.1"/>
    <property type="molecule type" value="Genomic_DNA"/>
</dbReference>
<dbReference type="RefSeq" id="WP_004042658.1">
    <property type="nucleotide sequence ID" value="NC_013967.1"/>
</dbReference>
<dbReference type="SMR" id="D4GU92"/>
<dbReference type="STRING" id="309800.HVO_2588"/>
<dbReference type="PaxDb" id="309800-C498_08220"/>
<dbReference type="EnsemblBacteria" id="ADE02810">
    <property type="protein sequence ID" value="ADE02810"/>
    <property type="gene ID" value="HVO_2588"/>
</dbReference>
<dbReference type="GeneID" id="8926735"/>
<dbReference type="KEGG" id="hvo:HVO_2588"/>
<dbReference type="PATRIC" id="fig|309800.29.peg.1605"/>
<dbReference type="eggNOG" id="arCOG01164">
    <property type="taxonomic scope" value="Archaea"/>
</dbReference>
<dbReference type="HOGENOM" id="CLU_031953_7_1_2"/>
<dbReference type="OrthoDB" id="23624at2157"/>
<dbReference type="BRENDA" id="1.1.1.42">
    <property type="organism ID" value="2561"/>
</dbReference>
<dbReference type="SABIO-RK" id="D4GU92"/>
<dbReference type="Proteomes" id="UP000008243">
    <property type="component" value="Chromosome"/>
</dbReference>
<dbReference type="Proteomes" id="UP000011532">
    <property type="component" value="Unassembled WGS sequence"/>
</dbReference>
<dbReference type="GO" id="GO:0004450">
    <property type="term" value="F:isocitrate dehydrogenase (NADP+) activity"/>
    <property type="evidence" value="ECO:0007669"/>
    <property type="project" value="UniProtKB-EC"/>
</dbReference>
<dbReference type="GO" id="GO:0000287">
    <property type="term" value="F:magnesium ion binding"/>
    <property type="evidence" value="ECO:0007669"/>
    <property type="project" value="InterPro"/>
</dbReference>
<dbReference type="GO" id="GO:0051287">
    <property type="term" value="F:NAD binding"/>
    <property type="evidence" value="ECO:0007669"/>
    <property type="project" value="InterPro"/>
</dbReference>
<dbReference type="GO" id="GO:0006097">
    <property type="term" value="P:glyoxylate cycle"/>
    <property type="evidence" value="ECO:0007669"/>
    <property type="project" value="UniProtKB-KW"/>
</dbReference>
<dbReference type="GO" id="GO:0006099">
    <property type="term" value="P:tricarboxylic acid cycle"/>
    <property type="evidence" value="ECO:0007669"/>
    <property type="project" value="UniProtKB-KW"/>
</dbReference>
<dbReference type="Gene3D" id="3.40.718.10">
    <property type="entry name" value="Isopropylmalate Dehydrogenase"/>
    <property type="match status" value="1"/>
</dbReference>
<dbReference type="InterPro" id="IPR019818">
    <property type="entry name" value="IsoCit/isopropylmalate_DH_CS"/>
</dbReference>
<dbReference type="InterPro" id="IPR004439">
    <property type="entry name" value="Isocitrate_DH_NADP_dimer_prok"/>
</dbReference>
<dbReference type="InterPro" id="IPR024084">
    <property type="entry name" value="IsoPropMal-DH-like_dom"/>
</dbReference>
<dbReference type="NCBIfam" id="NF005425">
    <property type="entry name" value="PRK07006.1"/>
    <property type="match status" value="1"/>
</dbReference>
<dbReference type="NCBIfam" id="TIGR00183">
    <property type="entry name" value="prok_nadp_idh"/>
    <property type="match status" value="1"/>
</dbReference>
<dbReference type="PANTHER" id="PTHR43504">
    <property type="entry name" value="ISOCITRATE DEHYDROGENASE [NADP]"/>
    <property type="match status" value="1"/>
</dbReference>
<dbReference type="PANTHER" id="PTHR43504:SF1">
    <property type="entry name" value="ISOCITRATE DEHYDROGENASE [NADP]"/>
    <property type="match status" value="1"/>
</dbReference>
<dbReference type="Pfam" id="PF00180">
    <property type="entry name" value="Iso_dh"/>
    <property type="match status" value="1"/>
</dbReference>
<dbReference type="SMART" id="SM01329">
    <property type="entry name" value="Iso_dh"/>
    <property type="match status" value="1"/>
</dbReference>
<dbReference type="SUPFAM" id="SSF53659">
    <property type="entry name" value="Isocitrate/Isopropylmalate dehydrogenase-like"/>
    <property type="match status" value="1"/>
</dbReference>
<dbReference type="PROSITE" id="PS00470">
    <property type="entry name" value="IDH_IMDH"/>
    <property type="match status" value="1"/>
</dbReference>
<reference key="1">
    <citation type="journal article" date="2002" name="FEMS Microbiol. Lett.">
        <title>NADP-dependent isocitrate dehydrogenase from the halophilic archaeon Haloferax volcanii: cloning, sequence determination and overexpression in Escherichia coli.</title>
        <authorList>
            <person name="Camacho M."/>
            <person name="Rodriguez-Arnedo A."/>
            <person name="Bonete M.J."/>
        </authorList>
    </citation>
    <scope>NUCLEOTIDE SEQUENCE [GENOMIC DNA]</scope>
    <scope>FUNCTION</scope>
    <scope>CATALYTIC ACTIVITY</scope>
    <scope>BIOPHYSICOCHEMICAL PROPERTIES</scope>
    <source>
        <strain>ATCC 29605 / DSM 3757 / JCM 8879 / NBRC 14742 / NCIMB 2012 / VKM B-1768 / DS2</strain>
    </source>
</reference>
<reference key="2">
    <citation type="journal article" date="2010" name="PLoS ONE">
        <title>The complete genome sequence of Haloferax volcanii DS2, a model archaeon.</title>
        <authorList>
            <person name="Hartman A.L."/>
            <person name="Norais C."/>
            <person name="Badger J.H."/>
            <person name="Delmas S."/>
            <person name="Haldenby S."/>
            <person name="Madupu R."/>
            <person name="Robinson J."/>
            <person name="Khouri H."/>
            <person name="Ren Q."/>
            <person name="Lowe T.M."/>
            <person name="Maupin-Furlow J."/>
            <person name="Pohlschroder M."/>
            <person name="Daniels C."/>
            <person name="Pfeiffer F."/>
            <person name="Allers T."/>
            <person name="Eisen J.A."/>
        </authorList>
    </citation>
    <scope>NUCLEOTIDE SEQUENCE [LARGE SCALE GENOMIC DNA]</scope>
    <source>
        <strain>ATCC 29605 / DSM 3757 / JCM 8879 / NBRC 14742 / NCIMB 2012 / VKM B-1768 / DS2</strain>
    </source>
</reference>
<reference key="3">
    <citation type="journal article" date="2014" name="PLoS Genet.">
        <title>Phylogenetically driven sequencing of extremely halophilic archaea reveals strategies for static and dynamic osmo-response.</title>
        <authorList>
            <person name="Becker E.A."/>
            <person name="Seitzer P.M."/>
            <person name="Tritt A."/>
            <person name="Larsen D."/>
            <person name="Krusor M."/>
            <person name="Yao A.I."/>
            <person name="Wu D."/>
            <person name="Madern D."/>
            <person name="Eisen J.A."/>
            <person name="Darling A.E."/>
            <person name="Facciotti M.T."/>
        </authorList>
    </citation>
    <scope>NUCLEOTIDE SEQUENCE [LARGE SCALE GENOMIC DNA]</scope>
    <source>
        <strain>ATCC 29605 / DSM 3757 / JCM 8879 / NBRC 14742 / NCIMB 2012 / VKM B-1768 / DS2</strain>
    </source>
</reference>
<reference key="4">
    <citation type="journal article" date="1995" name="FEMS Microbiol. Lett.">
        <title>Isocitrate dehydrogenases from Haloferax volcanii and Sulfolobus solfataricus: enzyme purification, characterisation and N-terminal sequence.</title>
        <authorList>
            <person name="Camacho M.L."/>
            <person name="Brown R.A."/>
            <person name="Bonete M.J."/>
            <person name="Danson M.J."/>
            <person name="Hough D.W."/>
        </authorList>
    </citation>
    <scope>PROTEIN SEQUENCE OF 2-19</scope>
    <scope>FUNCTION</scope>
    <scope>CATALYTIC ACTIVITY</scope>
    <scope>BIOPHYSICOCHEMICAL PROPERTIES</scope>
    <scope>SUBUNIT</scope>
    <source>
        <strain>ATCC 29605 / DSM 3757 / JCM 8879 / NBRC 14742 / NCIMB 2012 / VKM B-1768 / DS2</strain>
    </source>
</reference>
<sequence length="419" mass="45810">MSYDQIEVPDDGEKITVDEETGELSVPDNPIIPIIHGDGIGTDVGPAAQKVLDAAAEATGRSVSWMRVYAGSSARDKYDENLPEDTVSAIRNHRVAIKGPLTTPVGAGFRSLNVALRKKLDLYANVRPTYHLDGVPSPVKNPSAMDMVTFRENTEDVYAGIEWEAGTDEVQKVKEFVEEEMGADGVIHDGPVGIGIKPITEFGTKRLVREAIEYALENDRPSVTLVHKGNIMKFTEGAFRDWGYELAEEEFGDVTITEDELWEEYDGERPEDKVVVKDRIADNMLQQLLTRTADYDVIATMNLNGDYMSDAAGAQIGGLGIAPGANFGEGLCLAEPVHGSAPKYAGEDKVNPTAMILSGRLMFEYMGWKDAGKLIRDAVEKTISDGDVTYDLERQIEGGNKLATSEYADKVVENIKELA</sequence>
<keyword id="KW-0903">Direct protein sequencing</keyword>
<keyword id="KW-0329">Glyoxylate bypass</keyword>
<keyword id="KW-0460">Magnesium</keyword>
<keyword id="KW-0464">Manganese</keyword>
<keyword id="KW-0479">Metal-binding</keyword>
<keyword id="KW-0521">NADP</keyword>
<keyword id="KW-0560">Oxidoreductase</keyword>
<keyword id="KW-1185">Reference proteome</keyword>
<keyword id="KW-0816">Tricarboxylic acid cycle</keyword>
<evidence type="ECO:0000250" key="1">
    <source>
        <dbReference type="UniProtKB" id="P08200"/>
    </source>
</evidence>
<evidence type="ECO:0000269" key="2">
    <source>
    </source>
</evidence>
<evidence type="ECO:0000269" key="3">
    <source>
    </source>
</evidence>
<evidence type="ECO:0000303" key="4">
    <source>
    </source>
</evidence>
<evidence type="ECO:0000303" key="5">
    <source>
    </source>
</evidence>
<evidence type="ECO:0000305" key="6"/>
<evidence type="ECO:0000305" key="7">
    <source>
    </source>
</evidence>
<evidence type="ECO:0000305" key="8">
    <source>
    </source>
</evidence>
<evidence type="ECO:0000312" key="9">
    <source>
        <dbReference type="EMBL" id="ADE02810.1"/>
    </source>
</evidence>
<evidence type="ECO:0000312" key="10">
    <source>
        <dbReference type="EMBL" id="CAC80860.2"/>
    </source>
</evidence>
<evidence type="ECO:0000312" key="11">
    <source>
        <dbReference type="EMBL" id="ELY32497.1"/>
    </source>
</evidence>